<name>Y4EK_SINFN</name>
<keyword id="KW-0560">Oxidoreductase</keyword>
<keyword id="KW-0614">Plasmid</keyword>
<keyword id="KW-1185">Reference proteome</keyword>
<organism>
    <name type="scientific">Sinorhizobium fredii (strain NBRC 101917 / NGR234)</name>
    <dbReference type="NCBI Taxonomy" id="394"/>
    <lineage>
        <taxon>Bacteria</taxon>
        <taxon>Pseudomonadati</taxon>
        <taxon>Pseudomonadota</taxon>
        <taxon>Alphaproteobacteria</taxon>
        <taxon>Hyphomicrobiales</taxon>
        <taxon>Rhizobiaceae</taxon>
        <taxon>Sinorhizobium/Ensifer group</taxon>
        <taxon>Sinorhizobium</taxon>
    </lineage>
</organism>
<protein>
    <recommendedName>
        <fullName>Uncharacterized short-chain type dehydrogenase/reductase y4eK</fullName>
        <ecNumber>1.-.-.-</ecNumber>
    </recommendedName>
</protein>
<proteinExistence type="inferred from homology"/>
<accession>P55434</accession>
<geneLocation type="plasmid">
    <name>sym pNGR234a</name>
</geneLocation>
<reference key="1">
    <citation type="journal article" date="1997" name="Nature">
        <title>Molecular basis of symbiosis between Rhizobium and legumes.</title>
        <authorList>
            <person name="Freiberg C.A."/>
            <person name="Fellay R."/>
            <person name="Bairoch A."/>
            <person name="Broughton W.J."/>
            <person name="Rosenthal A."/>
            <person name="Perret X."/>
        </authorList>
    </citation>
    <scope>NUCLEOTIDE SEQUENCE [LARGE SCALE GENOMIC DNA]</scope>
    <source>
        <strain>NBRC 101917 / NGR234</strain>
    </source>
</reference>
<reference key="2">
    <citation type="journal article" date="2009" name="Appl. Environ. Microbiol.">
        <title>Rhizobium sp. strain NGR234 possesses a remarkable number of secretion systems.</title>
        <authorList>
            <person name="Schmeisser C."/>
            <person name="Liesegang H."/>
            <person name="Krysciak D."/>
            <person name="Bakkou N."/>
            <person name="Le Quere A."/>
            <person name="Wollherr A."/>
            <person name="Heinemeyer I."/>
            <person name="Morgenstern B."/>
            <person name="Pommerening-Roeser A."/>
            <person name="Flores M."/>
            <person name="Palacios R."/>
            <person name="Brenner S."/>
            <person name="Gottschalk G."/>
            <person name="Schmitz R.A."/>
            <person name="Broughton W.J."/>
            <person name="Perret X."/>
            <person name="Strittmatter A.W."/>
            <person name="Streit W.R."/>
        </authorList>
    </citation>
    <scope>NUCLEOTIDE SEQUENCE [LARGE SCALE GENOMIC DNA]</scope>
    <source>
        <strain>NBRC 101917 / NGR234</strain>
    </source>
</reference>
<dbReference type="EC" id="1.-.-.-"/>
<dbReference type="EMBL" id="U00090">
    <property type="protein sequence ID" value="AAB91654.1"/>
    <property type="molecule type" value="Genomic_DNA"/>
</dbReference>
<dbReference type="RefSeq" id="NP_443842.1">
    <property type="nucleotide sequence ID" value="NC_000914.2"/>
</dbReference>
<dbReference type="SMR" id="P55434"/>
<dbReference type="KEGG" id="rhi:NGR_a03840"/>
<dbReference type="PATRIC" id="fig|394.7.peg.397"/>
<dbReference type="eggNOG" id="COG4221">
    <property type="taxonomic scope" value="Bacteria"/>
</dbReference>
<dbReference type="HOGENOM" id="CLU_010194_2_10_5"/>
<dbReference type="OrthoDB" id="658698at2"/>
<dbReference type="Proteomes" id="UP000001054">
    <property type="component" value="Plasmid pNGR234a"/>
</dbReference>
<dbReference type="GO" id="GO:0016491">
    <property type="term" value="F:oxidoreductase activity"/>
    <property type="evidence" value="ECO:0007669"/>
    <property type="project" value="UniProtKB-KW"/>
</dbReference>
<dbReference type="FunFam" id="3.40.50.720:FF:000047">
    <property type="entry name" value="NADP-dependent L-serine/L-allo-threonine dehydrogenase"/>
    <property type="match status" value="1"/>
</dbReference>
<dbReference type="Gene3D" id="3.40.50.720">
    <property type="entry name" value="NAD(P)-binding Rossmann-like Domain"/>
    <property type="match status" value="1"/>
</dbReference>
<dbReference type="InterPro" id="IPR036291">
    <property type="entry name" value="NAD(P)-bd_dom_sf"/>
</dbReference>
<dbReference type="InterPro" id="IPR020904">
    <property type="entry name" value="Sc_DH/Rdtase_CS"/>
</dbReference>
<dbReference type="InterPro" id="IPR002347">
    <property type="entry name" value="SDR_fam"/>
</dbReference>
<dbReference type="PANTHER" id="PTHR42901">
    <property type="entry name" value="ALCOHOL DEHYDROGENASE"/>
    <property type="match status" value="1"/>
</dbReference>
<dbReference type="PANTHER" id="PTHR42901:SF1">
    <property type="entry name" value="ALCOHOL DEHYDROGENASE"/>
    <property type="match status" value="1"/>
</dbReference>
<dbReference type="Pfam" id="PF00106">
    <property type="entry name" value="adh_short"/>
    <property type="match status" value="1"/>
</dbReference>
<dbReference type="PRINTS" id="PR00081">
    <property type="entry name" value="GDHRDH"/>
</dbReference>
<dbReference type="PRINTS" id="PR00080">
    <property type="entry name" value="SDRFAMILY"/>
</dbReference>
<dbReference type="SUPFAM" id="SSF51735">
    <property type="entry name" value="NAD(P)-binding Rossmann-fold domains"/>
    <property type="match status" value="1"/>
</dbReference>
<dbReference type="PROSITE" id="PS00061">
    <property type="entry name" value="ADH_SHORT"/>
    <property type="match status" value="1"/>
</dbReference>
<sequence>MHPMNRYEVALVTGASSGIGKAIALELASAGLRVLALGRDRAALDELHSTAGIVPVVFDLSDVSEVYGKIAGEKIDVLVNNAGLLTASASLVDLSEDDIDAMIDINIRSVFKLTRHVLKQMIERRRGHIFFTGSSGGLAPHPNSSVYGATKAAVSLFSSALRCDLIGLPIRVTELFPGRVETNLYRTALGKEGAKKKLYDDNEAIQPEHMARLLRTALELPDFVDVTRLEVMPTGQVVGGAQMSKLSR</sequence>
<feature type="chain" id="PRO_0000054885" description="Uncharacterized short-chain type dehydrogenase/reductase y4eK">
    <location>
        <begin position="1"/>
        <end position="248"/>
    </location>
</feature>
<feature type="active site" description="Proton acceptor" evidence="2">
    <location>
        <position position="147"/>
    </location>
</feature>
<feature type="binding site" evidence="1">
    <location>
        <begin position="8"/>
        <end position="32"/>
    </location>
    <ligand>
        <name>NADP(+)</name>
        <dbReference type="ChEBI" id="CHEBI:58349"/>
    </ligand>
</feature>
<feature type="binding site" evidence="1">
    <location>
        <position position="134"/>
    </location>
    <ligand>
        <name>substrate</name>
    </ligand>
</feature>
<evidence type="ECO:0000250" key="1"/>
<evidence type="ECO:0000255" key="2">
    <source>
        <dbReference type="PROSITE-ProRule" id="PRU10001"/>
    </source>
</evidence>
<evidence type="ECO:0000305" key="3"/>
<comment type="similarity">
    <text evidence="3">Belongs to the short-chain dehydrogenases/reductases (SDR) family.</text>
</comment>
<gene>
    <name type="ordered locus">NGR_a03840</name>
    <name type="ORF">y4eK</name>
</gene>